<dbReference type="EMBL" id="CP000051">
    <property type="protein sequence ID" value="AAX50598.1"/>
    <property type="molecule type" value="Genomic_DNA"/>
</dbReference>
<dbReference type="RefSeq" id="WP_009871685.1">
    <property type="nucleotide sequence ID" value="NC_007429.1"/>
</dbReference>
<dbReference type="SMR" id="Q3KM24"/>
<dbReference type="KEGG" id="cta:CTA_0363"/>
<dbReference type="HOGENOM" id="CLU_140930_2_2_0"/>
<dbReference type="Proteomes" id="UP000002532">
    <property type="component" value="Chromosome"/>
</dbReference>
<dbReference type="GO" id="GO:0043590">
    <property type="term" value="C:bacterial nucleoid"/>
    <property type="evidence" value="ECO:0007669"/>
    <property type="project" value="UniProtKB-UniRule"/>
</dbReference>
<dbReference type="GO" id="GO:0005829">
    <property type="term" value="C:cytosol"/>
    <property type="evidence" value="ECO:0007669"/>
    <property type="project" value="TreeGrafter"/>
</dbReference>
<dbReference type="GO" id="GO:0003677">
    <property type="term" value="F:DNA binding"/>
    <property type="evidence" value="ECO:0007669"/>
    <property type="project" value="UniProtKB-UniRule"/>
</dbReference>
<dbReference type="FunFam" id="3.30.1310.10:FF:000009">
    <property type="entry name" value="Nucleoid-associated protein TC_0612"/>
    <property type="match status" value="1"/>
</dbReference>
<dbReference type="Gene3D" id="3.30.1310.10">
    <property type="entry name" value="Nucleoid-associated protein YbaB-like domain"/>
    <property type="match status" value="1"/>
</dbReference>
<dbReference type="HAMAP" id="MF_00274">
    <property type="entry name" value="DNA_YbaB_EbfC"/>
    <property type="match status" value="1"/>
</dbReference>
<dbReference type="InterPro" id="IPR036894">
    <property type="entry name" value="YbaB-like_sf"/>
</dbReference>
<dbReference type="InterPro" id="IPR004401">
    <property type="entry name" value="YbaB/EbfC"/>
</dbReference>
<dbReference type="NCBIfam" id="TIGR00103">
    <property type="entry name" value="DNA_YbaB_EbfC"/>
    <property type="match status" value="1"/>
</dbReference>
<dbReference type="PANTHER" id="PTHR33449">
    <property type="entry name" value="NUCLEOID-ASSOCIATED PROTEIN YBAB"/>
    <property type="match status" value="1"/>
</dbReference>
<dbReference type="PANTHER" id="PTHR33449:SF1">
    <property type="entry name" value="NUCLEOID-ASSOCIATED PROTEIN YBAB"/>
    <property type="match status" value="1"/>
</dbReference>
<dbReference type="Pfam" id="PF02575">
    <property type="entry name" value="YbaB_DNA_bd"/>
    <property type="match status" value="1"/>
</dbReference>
<dbReference type="PIRSF" id="PIRSF004555">
    <property type="entry name" value="UCP004555"/>
    <property type="match status" value="1"/>
</dbReference>
<dbReference type="SUPFAM" id="SSF82607">
    <property type="entry name" value="YbaB-like"/>
    <property type="match status" value="1"/>
</dbReference>
<protein>
    <recommendedName>
        <fullName evidence="1">Nucleoid-associated protein CTA_0363</fullName>
    </recommendedName>
</protein>
<keyword id="KW-0963">Cytoplasm</keyword>
<keyword id="KW-0238">DNA-binding</keyword>
<organism>
    <name type="scientific">Chlamydia trachomatis serovar A (strain ATCC VR-571B / DSM 19440 / HAR-13)</name>
    <dbReference type="NCBI Taxonomy" id="315277"/>
    <lineage>
        <taxon>Bacteria</taxon>
        <taxon>Pseudomonadati</taxon>
        <taxon>Chlamydiota</taxon>
        <taxon>Chlamydiia</taxon>
        <taxon>Chlamydiales</taxon>
        <taxon>Chlamydiaceae</taxon>
        <taxon>Chlamydia/Chlamydophila group</taxon>
        <taxon>Chlamydia</taxon>
    </lineage>
</organism>
<evidence type="ECO:0000255" key="1">
    <source>
        <dbReference type="HAMAP-Rule" id="MF_00274"/>
    </source>
</evidence>
<sequence>MGSGYAKKKKEAKLMERQFMEMEASLEQKRFSGEAGNGLVSVTINGKCDLVDVRIKPDCLDPEDPEVVADLFRAAFKAAKAALDSEMSAMQMGMPF</sequence>
<feature type="chain" id="PRO_1000003723" description="Nucleoid-associated protein CTA_0363">
    <location>
        <begin position="1"/>
        <end position="96"/>
    </location>
</feature>
<reference key="1">
    <citation type="journal article" date="2005" name="Infect. Immun.">
        <title>Comparative genomic analysis of Chlamydia trachomatis oculotropic and genitotropic strains.</title>
        <authorList>
            <person name="Carlson J.H."/>
            <person name="Porcella S.F."/>
            <person name="McClarty G."/>
            <person name="Caldwell H.D."/>
        </authorList>
    </citation>
    <scope>NUCLEOTIDE SEQUENCE [LARGE SCALE GENOMIC DNA]</scope>
    <source>
        <strain>ATCC VR-571B / DSM 19440 / HAR-13</strain>
    </source>
</reference>
<proteinExistence type="inferred from homology"/>
<comment type="function">
    <text evidence="1">Binds to DNA and alters its conformation. May be involved in regulation of gene expression, nucleoid organization and DNA protection.</text>
</comment>
<comment type="subunit">
    <text evidence="1">Homodimer.</text>
</comment>
<comment type="subcellular location">
    <subcellularLocation>
        <location evidence="1">Cytoplasm</location>
        <location evidence="1">Nucleoid</location>
    </subcellularLocation>
</comment>
<comment type="similarity">
    <text evidence="1">Belongs to the YbaB/EbfC family.</text>
</comment>
<name>Y363_CHLTA</name>
<gene>
    <name type="ordered locus">CTA_0363</name>
</gene>
<accession>Q3KM24</accession>